<keyword id="KW-0002">3D-structure</keyword>
<keyword id="KW-1185">Reference proteome</keyword>
<keyword id="KW-0804">Transcription</keyword>
<keyword id="KW-0805">Transcription regulation</keyword>
<name>HHA_SALTY</name>
<comment type="function">
    <text evidence="1">Interacts with H-NS and in this complex might contact DNA, which could provide an additional surface for DNA binding to the H-NS-Hha complex; may not bind DNA in the absence of H-NS (PubMed:23515315). In vitro improves the ability of H-NS to bind DNA under a precise set of conditions (PubMed:23515315).</text>
</comment>
<comment type="subunit">
    <text evidence="1">Interacts with H-NS; crystal structures suggest each subunit of an H-NS dimer could bind 1 Hha monomer (PubMed:23515315).</text>
</comment>
<comment type="disruption phenotype">
    <text evidence="1">Derepression of genes that are usually coregulated by H-NS and Hha (PubMed:23515315).</text>
</comment>
<comment type="similarity">
    <text evidence="2">Belongs to the Hha/YmoA/Cnu family.</text>
</comment>
<dbReference type="EMBL" id="AE006468">
    <property type="protein sequence ID" value="AAL19427.1"/>
    <property type="molecule type" value="Genomic_DNA"/>
</dbReference>
<dbReference type="RefSeq" id="NP_459468.1">
    <property type="nucleotide sequence ID" value="NC_003197.2"/>
</dbReference>
<dbReference type="RefSeq" id="WP_001280991.1">
    <property type="nucleotide sequence ID" value="NC_003197.2"/>
</dbReference>
<dbReference type="PDB" id="4ICG">
    <property type="method" value="X-ray"/>
    <property type="resolution" value="2.92 A"/>
    <property type="chains" value="C/D=1-72"/>
</dbReference>
<dbReference type="PDBsum" id="4ICG"/>
<dbReference type="SMR" id="Q7CR17"/>
<dbReference type="STRING" id="99287.STM0473"/>
<dbReference type="PaxDb" id="99287-STM0473"/>
<dbReference type="GeneID" id="1251993"/>
<dbReference type="KEGG" id="stm:STM0473"/>
<dbReference type="PATRIC" id="fig|99287.12.peg.505"/>
<dbReference type="HOGENOM" id="CLU_190629_0_0_6"/>
<dbReference type="OMA" id="RRCQSID"/>
<dbReference type="PhylomeDB" id="Q7CR17"/>
<dbReference type="BioCyc" id="SENT99287:STM0473-MONOMER"/>
<dbReference type="EvolutionaryTrace" id="Q7CR17"/>
<dbReference type="PHI-base" id="PHI:11219"/>
<dbReference type="Proteomes" id="UP000001014">
    <property type="component" value="Chromosome"/>
</dbReference>
<dbReference type="FunFam" id="1.20.1280.40:FF:000001">
    <property type="entry name" value="Hemolysin expression modulator Hha"/>
    <property type="match status" value="1"/>
</dbReference>
<dbReference type="Gene3D" id="1.20.1280.40">
    <property type="entry name" value="HHA"/>
    <property type="match status" value="1"/>
</dbReference>
<dbReference type="InterPro" id="IPR007985">
    <property type="entry name" value="Hemolysn_expr_modulating_HHA"/>
</dbReference>
<dbReference type="InterPro" id="IPR036666">
    <property type="entry name" value="HHA_sf"/>
</dbReference>
<dbReference type="NCBIfam" id="NF008191">
    <property type="entry name" value="PRK10945.1"/>
    <property type="match status" value="1"/>
</dbReference>
<dbReference type="Pfam" id="PF05321">
    <property type="entry name" value="HHA"/>
    <property type="match status" value="1"/>
</dbReference>
<dbReference type="SUPFAM" id="SSF68989">
    <property type="entry name" value="Hemolysin expression modulating protein HHA"/>
    <property type="match status" value="1"/>
</dbReference>
<evidence type="ECO:0000269" key="1">
    <source>
    </source>
</evidence>
<evidence type="ECO:0000305" key="2"/>
<evidence type="ECO:0007829" key="3">
    <source>
        <dbReference type="PDB" id="4ICG"/>
    </source>
</evidence>
<sequence>MSDKPLTKTDYLMRLRRCQTIDTLERVIEKNKYELSDNELAVFYSAADHRLAELTMNKLYDKIPSSVWKFIR</sequence>
<protein>
    <recommendedName>
        <fullName>Hemolysin expression-modulating protein Hha</fullName>
    </recommendedName>
</protein>
<gene>
    <name type="primary">hha</name>
    <name type="ordered locus">STM0473</name>
</gene>
<organism>
    <name type="scientific">Salmonella typhimurium (strain LT2 / SGSC1412 / ATCC 700720)</name>
    <dbReference type="NCBI Taxonomy" id="99287"/>
    <lineage>
        <taxon>Bacteria</taxon>
        <taxon>Pseudomonadati</taxon>
        <taxon>Pseudomonadota</taxon>
        <taxon>Gammaproteobacteria</taxon>
        <taxon>Enterobacterales</taxon>
        <taxon>Enterobacteriaceae</taxon>
        <taxon>Salmonella</taxon>
    </lineage>
</organism>
<reference key="1">
    <citation type="journal article" date="2001" name="Nature">
        <title>Complete genome sequence of Salmonella enterica serovar Typhimurium LT2.</title>
        <authorList>
            <person name="McClelland M."/>
            <person name="Sanderson K.E."/>
            <person name="Spieth J."/>
            <person name="Clifton S.W."/>
            <person name="Latreille P."/>
            <person name="Courtney L."/>
            <person name="Porwollik S."/>
            <person name="Ali J."/>
            <person name="Dante M."/>
            <person name="Du F."/>
            <person name="Hou S."/>
            <person name="Layman D."/>
            <person name="Leonard S."/>
            <person name="Nguyen C."/>
            <person name="Scott K."/>
            <person name="Holmes A."/>
            <person name="Grewal N."/>
            <person name="Mulvaney E."/>
            <person name="Ryan E."/>
            <person name="Sun H."/>
            <person name="Florea L."/>
            <person name="Miller W."/>
            <person name="Stoneking T."/>
            <person name="Nhan M."/>
            <person name="Waterston R."/>
            <person name="Wilson R.K."/>
        </authorList>
    </citation>
    <scope>NUCLEOTIDE SEQUENCE [LARGE SCALE GENOMIC DNA]</scope>
    <source>
        <strain>LT2 / SGSC1412 / ATCC 700720</strain>
    </source>
</reference>
<reference key="2">
    <citation type="journal article" date="2013" name="J. Biol. Chem.">
        <title>Structural insights into the regulation of foreign genes in Salmonella by the Hha/H-NS complex.</title>
        <authorList>
            <person name="Ali S.S."/>
            <person name="Whitney J.C."/>
            <person name="Stevenson J."/>
            <person name="Robinson H."/>
            <person name="Howell P.L."/>
            <person name="Navarre W.W."/>
        </authorList>
    </citation>
    <scope>X-RAY CRYSTALLOGRAPHY (2.92 ANGSTROMS) IN COMPLEX WITH H-NS N-TERMINAL FRAGMENT</scope>
    <scope>FUNCTION</scope>
    <scope>SUBUNIT</scope>
    <scope>DISRUPTION PHENOTYPE</scope>
    <scope>MUTAGENESIS OF 14-ARG--ARG-17; ARG-14; ARG-17; ARG-26 AND ASP-48</scope>
    <source>
        <strain>LT2 / SGSC1412 / ATCC 700720</strain>
    </source>
</reference>
<feature type="chain" id="PRO_0000436898" description="Hemolysin expression-modulating protein Hha">
    <location>
        <begin position="1"/>
        <end position="72"/>
    </location>
</feature>
<feature type="mutagenesis site" description="Still interacts with H-NS, derepresses expression of H-NS/Hha coregulated genes but not genes regulated solely by H-NS." evidence="1">
    <original>RLRR</original>
    <variation>ALRA</variation>
    <location>
        <begin position="14"/>
        <end position="17"/>
    </location>
</feature>
<feature type="mutagenesis site" description="Still interacts with H-NS, derepresses expression of H-NS/Hha coregulated genes but not genes regulated solely by H-NS." evidence="1">
    <original>R</original>
    <variation>A</variation>
    <location>
        <position position="14"/>
    </location>
</feature>
<feature type="mutagenesis site" description="Still interacts with H-NS, derepresses expression of H-NS/Hha coregulated genes but not genes regulated solely by H-NS." evidence="1">
    <original>R</original>
    <variation>A</variation>
    <location>
        <position position="17"/>
    </location>
</feature>
<feature type="mutagenesis site" description="Still interacts with H-NS, derepresses expression of H-NS/Hha coregulated genes but not genes regulated solely by H-NS." evidence="1">
    <original>R</original>
    <variation>A</variation>
    <location>
        <position position="26"/>
    </location>
</feature>
<feature type="mutagenesis site" description="No longer interacts with H-NS, derepresses expression of H-NS/Hha coregulated genes but not genes regulated solely by H-NS." evidence="1">
    <original>D</original>
    <variation>A</variation>
    <location>
        <position position="48"/>
    </location>
</feature>
<feature type="helix" evidence="3">
    <location>
        <begin position="8"/>
        <end position="16"/>
    </location>
</feature>
<feature type="helix" evidence="3">
    <location>
        <begin position="22"/>
        <end position="34"/>
    </location>
</feature>
<feature type="helix" evidence="3">
    <location>
        <begin position="40"/>
        <end position="55"/>
    </location>
</feature>
<feature type="helix" evidence="3">
    <location>
        <begin position="67"/>
        <end position="70"/>
    </location>
</feature>
<proteinExistence type="evidence at protein level"/>
<accession>Q7CR17</accession>
<accession>Q7BLT0</accession>